<keyword id="KW-0997">Cell inner membrane</keyword>
<keyword id="KW-1003">Cell membrane</keyword>
<keyword id="KW-0342">GTP-binding</keyword>
<keyword id="KW-0378">Hydrolase</keyword>
<keyword id="KW-0472">Membrane</keyword>
<keyword id="KW-0547">Nucleotide-binding</keyword>
<keyword id="KW-0648">Protein biosynthesis</keyword>
<dbReference type="EC" id="3.6.5.n1" evidence="1"/>
<dbReference type="EMBL" id="CP000943">
    <property type="protein sequence ID" value="ACA14794.1"/>
    <property type="molecule type" value="Genomic_DNA"/>
</dbReference>
<dbReference type="RefSeq" id="WP_012330212.1">
    <property type="nucleotide sequence ID" value="NC_010511.1"/>
</dbReference>
<dbReference type="SMR" id="B0UFE0"/>
<dbReference type="STRING" id="426117.M446_0221"/>
<dbReference type="KEGG" id="met:M446_0221"/>
<dbReference type="eggNOG" id="COG0481">
    <property type="taxonomic scope" value="Bacteria"/>
</dbReference>
<dbReference type="HOGENOM" id="CLU_009995_3_3_5"/>
<dbReference type="GO" id="GO:0005886">
    <property type="term" value="C:plasma membrane"/>
    <property type="evidence" value="ECO:0007669"/>
    <property type="project" value="UniProtKB-SubCell"/>
</dbReference>
<dbReference type="GO" id="GO:0005525">
    <property type="term" value="F:GTP binding"/>
    <property type="evidence" value="ECO:0007669"/>
    <property type="project" value="UniProtKB-UniRule"/>
</dbReference>
<dbReference type="GO" id="GO:0003924">
    <property type="term" value="F:GTPase activity"/>
    <property type="evidence" value="ECO:0007669"/>
    <property type="project" value="UniProtKB-UniRule"/>
</dbReference>
<dbReference type="GO" id="GO:0097216">
    <property type="term" value="F:guanosine tetraphosphate binding"/>
    <property type="evidence" value="ECO:0007669"/>
    <property type="project" value="UniProtKB-ARBA"/>
</dbReference>
<dbReference type="GO" id="GO:0043022">
    <property type="term" value="F:ribosome binding"/>
    <property type="evidence" value="ECO:0007669"/>
    <property type="project" value="UniProtKB-UniRule"/>
</dbReference>
<dbReference type="GO" id="GO:0003746">
    <property type="term" value="F:translation elongation factor activity"/>
    <property type="evidence" value="ECO:0007669"/>
    <property type="project" value="UniProtKB-UniRule"/>
</dbReference>
<dbReference type="GO" id="GO:0045727">
    <property type="term" value="P:positive regulation of translation"/>
    <property type="evidence" value="ECO:0007669"/>
    <property type="project" value="UniProtKB-UniRule"/>
</dbReference>
<dbReference type="CDD" id="cd03699">
    <property type="entry name" value="EF4_II"/>
    <property type="match status" value="1"/>
</dbReference>
<dbReference type="CDD" id="cd16260">
    <property type="entry name" value="EF4_III"/>
    <property type="match status" value="1"/>
</dbReference>
<dbReference type="CDD" id="cd01890">
    <property type="entry name" value="LepA"/>
    <property type="match status" value="1"/>
</dbReference>
<dbReference type="CDD" id="cd03709">
    <property type="entry name" value="lepA_C"/>
    <property type="match status" value="1"/>
</dbReference>
<dbReference type="FunFam" id="3.40.50.300:FF:000078">
    <property type="entry name" value="Elongation factor 4"/>
    <property type="match status" value="1"/>
</dbReference>
<dbReference type="FunFam" id="2.40.30.10:FF:000015">
    <property type="entry name" value="Translation factor GUF1, mitochondrial"/>
    <property type="match status" value="1"/>
</dbReference>
<dbReference type="FunFam" id="3.30.70.240:FF:000007">
    <property type="entry name" value="Translation factor GUF1, mitochondrial"/>
    <property type="match status" value="1"/>
</dbReference>
<dbReference type="FunFam" id="3.30.70.2570:FF:000001">
    <property type="entry name" value="Translation factor GUF1, mitochondrial"/>
    <property type="match status" value="1"/>
</dbReference>
<dbReference type="FunFam" id="3.30.70.870:FF:000004">
    <property type="entry name" value="Translation factor GUF1, mitochondrial"/>
    <property type="match status" value="1"/>
</dbReference>
<dbReference type="Gene3D" id="3.30.70.240">
    <property type="match status" value="1"/>
</dbReference>
<dbReference type="Gene3D" id="3.30.70.2570">
    <property type="entry name" value="Elongation factor 4, C-terminal domain"/>
    <property type="match status" value="1"/>
</dbReference>
<dbReference type="Gene3D" id="3.30.70.870">
    <property type="entry name" value="Elongation Factor G (Translational Gtpase), domain 3"/>
    <property type="match status" value="1"/>
</dbReference>
<dbReference type="Gene3D" id="3.40.50.300">
    <property type="entry name" value="P-loop containing nucleotide triphosphate hydrolases"/>
    <property type="match status" value="1"/>
</dbReference>
<dbReference type="Gene3D" id="2.40.30.10">
    <property type="entry name" value="Translation factors"/>
    <property type="match status" value="1"/>
</dbReference>
<dbReference type="HAMAP" id="MF_00071">
    <property type="entry name" value="LepA"/>
    <property type="match status" value="1"/>
</dbReference>
<dbReference type="InterPro" id="IPR006297">
    <property type="entry name" value="EF-4"/>
</dbReference>
<dbReference type="InterPro" id="IPR035647">
    <property type="entry name" value="EFG_III/V"/>
</dbReference>
<dbReference type="InterPro" id="IPR000640">
    <property type="entry name" value="EFG_V-like"/>
</dbReference>
<dbReference type="InterPro" id="IPR004161">
    <property type="entry name" value="EFTu-like_2"/>
</dbReference>
<dbReference type="InterPro" id="IPR031157">
    <property type="entry name" value="G_TR_CS"/>
</dbReference>
<dbReference type="InterPro" id="IPR038363">
    <property type="entry name" value="LepA_C_sf"/>
</dbReference>
<dbReference type="InterPro" id="IPR013842">
    <property type="entry name" value="LepA_CTD"/>
</dbReference>
<dbReference type="InterPro" id="IPR035654">
    <property type="entry name" value="LepA_IV"/>
</dbReference>
<dbReference type="InterPro" id="IPR027417">
    <property type="entry name" value="P-loop_NTPase"/>
</dbReference>
<dbReference type="InterPro" id="IPR005225">
    <property type="entry name" value="Small_GTP-bd"/>
</dbReference>
<dbReference type="InterPro" id="IPR000795">
    <property type="entry name" value="T_Tr_GTP-bd_dom"/>
</dbReference>
<dbReference type="NCBIfam" id="TIGR01393">
    <property type="entry name" value="lepA"/>
    <property type="match status" value="1"/>
</dbReference>
<dbReference type="NCBIfam" id="TIGR00231">
    <property type="entry name" value="small_GTP"/>
    <property type="match status" value="1"/>
</dbReference>
<dbReference type="PANTHER" id="PTHR43512:SF4">
    <property type="entry name" value="TRANSLATION FACTOR GUF1 HOMOLOG, CHLOROPLASTIC"/>
    <property type="match status" value="1"/>
</dbReference>
<dbReference type="PANTHER" id="PTHR43512">
    <property type="entry name" value="TRANSLATION FACTOR GUF1-RELATED"/>
    <property type="match status" value="1"/>
</dbReference>
<dbReference type="Pfam" id="PF00679">
    <property type="entry name" value="EFG_C"/>
    <property type="match status" value="1"/>
</dbReference>
<dbReference type="Pfam" id="PF00009">
    <property type="entry name" value="GTP_EFTU"/>
    <property type="match status" value="1"/>
</dbReference>
<dbReference type="Pfam" id="PF03144">
    <property type="entry name" value="GTP_EFTU_D2"/>
    <property type="match status" value="1"/>
</dbReference>
<dbReference type="Pfam" id="PF06421">
    <property type="entry name" value="LepA_C"/>
    <property type="match status" value="1"/>
</dbReference>
<dbReference type="PRINTS" id="PR00315">
    <property type="entry name" value="ELONGATNFCT"/>
</dbReference>
<dbReference type="SMART" id="SM00838">
    <property type="entry name" value="EFG_C"/>
    <property type="match status" value="1"/>
</dbReference>
<dbReference type="SUPFAM" id="SSF54980">
    <property type="entry name" value="EF-G C-terminal domain-like"/>
    <property type="match status" value="2"/>
</dbReference>
<dbReference type="SUPFAM" id="SSF52540">
    <property type="entry name" value="P-loop containing nucleoside triphosphate hydrolases"/>
    <property type="match status" value="1"/>
</dbReference>
<dbReference type="PROSITE" id="PS00301">
    <property type="entry name" value="G_TR_1"/>
    <property type="match status" value="1"/>
</dbReference>
<dbReference type="PROSITE" id="PS51722">
    <property type="entry name" value="G_TR_2"/>
    <property type="match status" value="1"/>
</dbReference>
<protein>
    <recommendedName>
        <fullName evidence="1">Elongation factor 4</fullName>
        <shortName evidence="1">EF-4</shortName>
        <ecNumber evidence="1">3.6.5.n1</ecNumber>
    </recommendedName>
    <alternativeName>
        <fullName evidence="1">Ribosomal back-translocase LepA</fullName>
    </alternativeName>
</protein>
<sequence length="601" mass="66644">MTAKPIDTIRNFSIVAHIDHGKSTLADRLIQLTGALSAREMTEQVLDSMDIERERGITIKAQTVRLDYKAQDGREYVLNLMDTPGHVDFTYEVSRSLAACEGSLLVVDASQGVEAQTLANVYQAIDANHEIVPVLNKIDLPAAEPDRVKEQIEEVIGIDASEAVPISAKTGLNIEAVLEAIVAKLPPPKGDCEAPLKALLVDSWYDVYLGVVVLVRIVDGVLRKGMTIRMMGADAVYGVDRVGVFRPKMQDVAELGPGEVGFLTASIKEVADTRVGDTITEDRRPTDQALPGFKPVQPVVFCGLFPVDAAEFENLRAAMGKLRLNDASFSYEMETSAALGFGFRCGFLGLLHLEIIQERLEREFNLDLISTAPSVVYRLNMADGTMRELHNPADMPDVMKIDTIEEPWIRATILTPDDYLGGVLKLCQDRRGAQIDLNYVGKRAMVVYDLPLNEVVFDFYDRLKSISKGYASFDYHISDYREGDLVKMSILVNAEPVDALSMLVHRTRAESRGRAMCEKLKDLIPRHLFQIPVQAAIGGKIIARETIRALSKDVTAKCYGGDISRKRKLLDKQKEGKKRMRQFGKVEIPQEAFIAALKMDS</sequence>
<accession>B0UFE0</accession>
<comment type="function">
    <text evidence="1">Required for accurate and efficient protein synthesis under certain stress conditions. May act as a fidelity factor of the translation reaction, by catalyzing a one-codon backward translocation of tRNAs on improperly translocated ribosomes. Back-translocation proceeds from a post-translocation (POST) complex to a pre-translocation (PRE) complex, thus giving elongation factor G a second chance to translocate the tRNAs correctly. Binds to ribosomes in a GTP-dependent manner.</text>
</comment>
<comment type="catalytic activity">
    <reaction evidence="1">
        <text>GTP + H2O = GDP + phosphate + H(+)</text>
        <dbReference type="Rhea" id="RHEA:19669"/>
        <dbReference type="ChEBI" id="CHEBI:15377"/>
        <dbReference type="ChEBI" id="CHEBI:15378"/>
        <dbReference type="ChEBI" id="CHEBI:37565"/>
        <dbReference type="ChEBI" id="CHEBI:43474"/>
        <dbReference type="ChEBI" id="CHEBI:58189"/>
        <dbReference type="EC" id="3.6.5.n1"/>
    </reaction>
</comment>
<comment type="subcellular location">
    <subcellularLocation>
        <location evidence="1">Cell inner membrane</location>
        <topology evidence="1">Peripheral membrane protein</topology>
        <orientation evidence="1">Cytoplasmic side</orientation>
    </subcellularLocation>
</comment>
<comment type="similarity">
    <text evidence="1">Belongs to the TRAFAC class translation factor GTPase superfamily. Classic translation factor GTPase family. LepA subfamily.</text>
</comment>
<reference key="1">
    <citation type="submission" date="2008-02" db="EMBL/GenBank/DDBJ databases">
        <title>Complete sequence of chromosome of Methylobacterium sp. 4-46.</title>
        <authorList>
            <consortium name="US DOE Joint Genome Institute"/>
            <person name="Copeland A."/>
            <person name="Lucas S."/>
            <person name="Lapidus A."/>
            <person name="Glavina del Rio T."/>
            <person name="Dalin E."/>
            <person name="Tice H."/>
            <person name="Bruce D."/>
            <person name="Goodwin L."/>
            <person name="Pitluck S."/>
            <person name="Chertkov O."/>
            <person name="Brettin T."/>
            <person name="Detter J.C."/>
            <person name="Han C."/>
            <person name="Kuske C.R."/>
            <person name="Schmutz J."/>
            <person name="Larimer F."/>
            <person name="Land M."/>
            <person name="Hauser L."/>
            <person name="Kyrpides N."/>
            <person name="Ivanova N."/>
            <person name="Marx C.J."/>
            <person name="Richardson P."/>
        </authorList>
    </citation>
    <scope>NUCLEOTIDE SEQUENCE [LARGE SCALE GENOMIC DNA]</scope>
    <source>
        <strain>4-46</strain>
    </source>
</reference>
<gene>
    <name evidence="1" type="primary">lepA</name>
    <name type="ordered locus">M446_0221</name>
</gene>
<evidence type="ECO:0000255" key="1">
    <source>
        <dbReference type="HAMAP-Rule" id="MF_00071"/>
    </source>
</evidence>
<feature type="chain" id="PRO_1000117029" description="Elongation factor 4">
    <location>
        <begin position="1"/>
        <end position="601"/>
    </location>
</feature>
<feature type="domain" description="tr-type G">
    <location>
        <begin position="7"/>
        <end position="189"/>
    </location>
</feature>
<feature type="binding site" evidence="1">
    <location>
        <begin position="19"/>
        <end position="24"/>
    </location>
    <ligand>
        <name>GTP</name>
        <dbReference type="ChEBI" id="CHEBI:37565"/>
    </ligand>
</feature>
<feature type="binding site" evidence="1">
    <location>
        <begin position="136"/>
        <end position="139"/>
    </location>
    <ligand>
        <name>GTP</name>
        <dbReference type="ChEBI" id="CHEBI:37565"/>
    </ligand>
</feature>
<organism>
    <name type="scientific">Methylobacterium sp. (strain 4-46)</name>
    <dbReference type="NCBI Taxonomy" id="426117"/>
    <lineage>
        <taxon>Bacteria</taxon>
        <taxon>Pseudomonadati</taxon>
        <taxon>Pseudomonadota</taxon>
        <taxon>Alphaproteobacteria</taxon>
        <taxon>Hyphomicrobiales</taxon>
        <taxon>Methylobacteriaceae</taxon>
        <taxon>Methylobacterium</taxon>
    </lineage>
</organism>
<name>LEPA_METS4</name>
<proteinExistence type="inferred from homology"/>